<sequence length="301" mass="32247">MPRAHDDNWDLASSVGATATMVAAGRALATKDPRGLINDPFAEPLVRAVGLDFFTKLIDGELDIATTGNLSPGRAQAMIDGIAVRTKYFDDYFRTATDGGVRQVVILAAGLDARAYRLPWPAGTVVYEIDQPQVIDFKTTTLAGIGAKPTAIRRTVYIDLRADWPAALQAAGLDSTAPTAWLAEGMLIYLPPDPRTGCSTTAPNSVLRAARSLPNLSRALWISTQAGYEKWRIRFASTAWTSTWRRWCIPANAATSSTTCAPRAGTLRAQCGPTYSGAMVCPFPPHTTTIRSAKSSSSAVV</sequence>
<protein>
    <recommendedName>
        <fullName>Putative S-adenosyl-L-methionine-dependent methyltransferase Mb0746c</fullName>
        <ecNumber>2.1.1.-</ecNumber>
    </recommendedName>
</protein>
<organism>
    <name type="scientific">Mycobacterium bovis (strain ATCC BAA-935 / AF2122/97)</name>
    <dbReference type="NCBI Taxonomy" id="233413"/>
    <lineage>
        <taxon>Bacteria</taxon>
        <taxon>Bacillati</taxon>
        <taxon>Actinomycetota</taxon>
        <taxon>Actinomycetes</taxon>
        <taxon>Mycobacteriales</taxon>
        <taxon>Mycobacteriaceae</taxon>
        <taxon>Mycobacterium</taxon>
        <taxon>Mycobacterium tuberculosis complex</taxon>
    </lineage>
</organism>
<evidence type="ECO:0000250" key="1"/>
<evidence type="ECO:0000305" key="2"/>
<name>Y746_MYCBO</name>
<keyword id="KW-0489">Methyltransferase</keyword>
<keyword id="KW-1185">Reference proteome</keyword>
<keyword id="KW-0949">S-adenosyl-L-methionine</keyword>
<keyword id="KW-0808">Transferase</keyword>
<reference key="1">
    <citation type="journal article" date="2003" name="Proc. Natl. Acad. Sci. U.S.A.">
        <title>The complete genome sequence of Mycobacterium bovis.</title>
        <authorList>
            <person name="Garnier T."/>
            <person name="Eiglmeier K."/>
            <person name="Camus J.-C."/>
            <person name="Medina N."/>
            <person name="Mansoor H."/>
            <person name="Pryor M."/>
            <person name="Duthoy S."/>
            <person name="Grondin S."/>
            <person name="Lacroix C."/>
            <person name="Monsempe C."/>
            <person name="Simon S."/>
            <person name="Harris B."/>
            <person name="Atkin R."/>
            <person name="Doggett J."/>
            <person name="Mayes R."/>
            <person name="Keating L."/>
            <person name="Wheeler P.R."/>
            <person name="Parkhill J."/>
            <person name="Barrell B.G."/>
            <person name="Cole S.T."/>
            <person name="Gordon S.V."/>
            <person name="Hewinson R.G."/>
        </authorList>
    </citation>
    <scope>NUCLEOTIDE SEQUENCE [LARGE SCALE GENOMIC DNA]</scope>
    <source>
        <strain>ATCC BAA-935 / AF2122/97</strain>
    </source>
</reference>
<reference key="2">
    <citation type="journal article" date="2017" name="Genome Announc.">
        <title>Updated reference genome sequence and annotation of Mycobacterium bovis AF2122/97.</title>
        <authorList>
            <person name="Malone K.M."/>
            <person name="Farrell D."/>
            <person name="Stuber T.P."/>
            <person name="Schubert O.T."/>
            <person name="Aebersold R."/>
            <person name="Robbe-Austerman S."/>
            <person name="Gordon S.V."/>
        </authorList>
    </citation>
    <scope>NUCLEOTIDE SEQUENCE [LARGE SCALE GENOMIC DNA]</scope>
    <scope>GENOME REANNOTATION</scope>
    <source>
        <strain>ATCC BAA-935 / AF2122/97</strain>
    </source>
</reference>
<dbReference type="EC" id="2.1.1.-"/>
<dbReference type="EMBL" id="LT708304">
    <property type="protein sequence ID" value="SIT99345.1"/>
    <property type="molecule type" value="Genomic_DNA"/>
</dbReference>
<dbReference type="RefSeq" id="NP_854404.1">
    <property type="nucleotide sequence ID" value="NC_002945.3"/>
</dbReference>
<dbReference type="SMR" id="Q7U1E7"/>
<dbReference type="KEGG" id="mbo:BQ2027_MB0746C"/>
<dbReference type="PATRIC" id="fig|233413.5.peg.813"/>
<dbReference type="Proteomes" id="UP000001419">
    <property type="component" value="Chromosome"/>
</dbReference>
<dbReference type="GO" id="GO:0008168">
    <property type="term" value="F:methyltransferase activity"/>
    <property type="evidence" value="ECO:0007669"/>
    <property type="project" value="UniProtKB-KW"/>
</dbReference>
<dbReference type="GO" id="GO:0032259">
    <property type="term" value="P:methylation"/>
    <property type="evidence" value="ECO:0007669"/>
    <property type="project" value="UniProtKB-KW"/>
</dbReference>
<dbReference type="Gene3D" id="3.40.50.150">
    <property type="entry name" value="Vaccinia Virus protein VP39"/>
    <property type="match status" value="1"/>
</dbReference>
<dbReference type="InterPro" id="IPR007213">
    <property type="entry name" value="Ppm1/Ppm2/Tcmp"/>
</dbReference>
<dbReference type="InterPro" id="IPR029063">
    <property type="entry name" value="SAM-dependent_MTases_sf"/>
</dbReference>
<dbReference type="InterPro" id="IPR011610">
    <property type="entry name" value="SAM_mthyl_Trfase_ML2640-like"/>
</dbReference>
<dbReference type="NCBIfam" id="TIGR00027">
    <property type="entry name" value="mthyl_TIGR00027"/>
    <property type="match status" value="1"/>
</dbReference>
<dbReference type="PANTHER" id="PTHR43619">
    <property type="entry name" value="S-ADENOSYL-L-METHIONINE-DEPENDENT METHYLTRANSFERASE YKTD-RELATED"/>
    <property type="match status" value="1"/>
</dbReference>
<dbReference type="PANTHER" id="PTHR43619:SF2">
    <property type="entry name" value="S-ADENOSYL-L-METHIONINE-DEPENDENT METHYLTRANSFERASES SUPERFAMILY PROTEIN"/>
    <property type="match status" value="1"/>
</dbReference>
<dbReference type="Pfam" id="PF04072">
    <property type="entry name" value="LCM"/>
    <property type="match status" value="1"/>
</dbReference>
<dbReference type="SUPFAM" id="SSF53335">
    <property type="entry name" value="S-adenosyl-L-methionine-dependent methyltransferases"/>
    <property type="match status" value="1"/>
</dbReference>
<accession>Q7U1E7</accession>
<accession>A0A1R3XWM4</accession>
<accession>X2BFZ0</accession>
<gene>
    <name type="ordered locus">BQ2027_MB0746C</name>
</gene>
<comment type="function">
    <text evidence="1">Exhibits S-adenosyl-L-methionine-dependent methyltransferase activity.</text>
</comment>
<comment type="similarity">
    <text evidence="2">Belongs to the UPF0677 family.</text>
</comment>
<proteinExistence type="inferred from homology"/>
<feature type="chain" id="PRO_0000361137" description="Putative S-adenosyl-L-methionine-dependent methyltransferase Mb0746c">
    <location>
        <begin position="1"/>
        <end position="301"/>
    </location>
</feature>
<feature type="binding site" evidence="1">
    <location>
        <position position="130"/>
    </location>
    <ligand>
        <name>S-adenosyl-L-methionine</name>
        <dbReference type="ChEBI" id="CHEBI:59789"/>
    </ligand>
</feature>
<feature type="binding site" evidence="1">
    <location>
        <begin position="159"/>
        <end position="160"/>
    </location>
    <ligand>
        <name>S-adenosyl-L-methionine</name>
        <dbReference type="ChEBI" id="CHEBI:59789"/>
    </ligand>
</feature>